<feature type="chain" id="PRO_0000357029" description="KH domain-containing protein At5g56140">
    <location>
        <begin position="1"/>
        <end position="315"/>
    </location>
</feature>
<feature type="domain" description="KH">
    <location>
        <begin position="171"/>
        <end position="238"/>
    </location>
</feature>
<feature type="region of interest" description="Disordered" evidence="2">
    <location>
        <begin position="1"/>
        <end position="53"/>
    </location>
</feature>
<feature type="region of interest" description="Disordered" evidence="2">
    <location>
        <begin position="136"/>
        <end position="158"/>
    </location>
</feature>
<feature type="region of interest" description="Disordered" evidence="2">
    <location>
        <begin position="289"/>
        <end position="315"/>
    </location>
</feature>
<feature type="compositionally biased region" description="Gly residues" evidence="2">
    <location>
        <begin position="7"/>
        <end position="28"/>
    </location>
</feature>
<feature type="compositionally biased region" description="Polar residues" evidence="2">
    <location>
        <begin position="31"/>
        <end position="53"/>
    </location>
</feature>
<feature type="compositionally biased region" description="Polar residues" evidence="2">
    <location>
        <begin position="136"/>
        <end position="146"/>
    </location>
</feature>
<feature type="modified residue" description="Phosphoserine" evidence="1">
    <location>
        <position position="300"/>
    </location>
</feature>
<feature type="sequence conflict" description="In Ref. 3; AAL87326." evidence="3" ref="3">
    <original>D</original>
    <variation>N</variation>
    <location>
        <position position="249"/>
    </location>
</feature>
<protein>
    <recommendedName>
        <fullName>KH domain-containing protein At5g56140</fullName>
    </recommendedName>
    <alternativeName>
        <fullName>Quaking-like protein 2</fullName>
    </alternativeName>
</protein>
<name>QKIL2_ARATH</name>
<proteinExistence type="evidence at transcript level"/>
<accession>Q9FKT4</accession>
<accession>Q8RXJ4</accession>
<keyword id="KW-0539">Nucleus</keyword>
<keyword id="KW-0597">Phosphoprotein</keyword>
<keyword id="KW-1185">Reference proteome</keyword>
<keyword id="KW-0694">RNA-binding</keyword>
<evidence type="ECO:0000250" key="1">
    <source>
        <dbReference type="UniProtKB" id="Q9ZVI3"/>
    </source>
</evidence>
<evidence type="ECO:0000256" key="2">
    <source>
        <dbReference type="SAM" id="MobiDB-lite"/>
    </source>
</evidence>
<evidence type="ECO:0000305" key="3"/>
<reference key="1">
    <citation type="journal article" date="1998" name="DNA Res.">
        <title>Structural analysis of Arabidopsis thaliana chromosome 5. V. Sequence features of the regions of 1,381,565 bp covered by twenty one physically assigned P1 and TAC clones.</title>
        <authorList>
            <person name="Kaneko T."/>
            <person name="Kotani H."/>
            <person name="Nakamura Y."/>
            <person name="Sato S."/>
            <person name="Asamizu E."/>
            <person name="Miyajima N."/>
            <person name="Tabata S."/>
        </authorList>
    </citation>
    <scope>NUCLEOTIDE SEQUENCE [LARGE SCALE GENOMIC DNA]</scope>
    <source>
        <strain>cv. Columbia</strain>
    </source>
</reference>
<reference key="2">
    <citation type="journal article" date="2017" name="Plant J.">
        <title>Araport11: a complete reannotation of the Arabidopsis thaliana reference genome.</title>
        <authorList>
            <person name="Cheng C.Y."/>
            <person name="Krishnakumar V."/>
            <person name="Chan A.P."/>
            <person name="Thibaud-Nissen F."/>
            <person name="Schobel S."/>
            <person name="Town C.D."/>
        </authorList>
    </citation>
    <scope>GENOME REANNOTATION</scope>
    <source>
        <strain>cv. Columbia</strain>
    </source>
</reference>
<reference key="3">
    <citation type="journal article" date="2003" name="Science">
        <title>Empirical analysis of transcriptional activity in the Arabidopsis genome.</title>
        <authorList>
            <person name="Yamada K."/>
            <person name="Lim J."/>
            <person name="Dale J.M."/>
            <person name="Chen H."/>
            <person name="Shinn P."/>
            <person name="Palm C.J."/>
            <person name="Southwick A.M."/>
            <person name="Wu H.C."/>
            <person name="Kim C.J."/>
            <person name="Nguyen M."/>
            <person name="Pham P.K."/>
            <person name="Cheuk R.F."/>
            <person name="Karlin-Newmann G."/>
            <person name="Liu S.X."/>
            <person name="Lam B."/>
            <person name="Sakano H."/>
            <person name="Wu T."/>
            <person name="Yu G."/>
            <person name="Miranda M."/>
            <person name="Quach H.L."/>
            <person name="Tripp M."/>
            <person name="Chang C.H."/>
            <person name="Lee J.M."/>
            <person name="Toriumi M.J."/>
            <person name="Chan M.M."/>
            <person name="Tang C.C."/>
            <person name="Onodera C.S."/>
            <person name="Deng J.M."/>
            <person name="Akiyama K."/>
            <person name="Ansari Y."/>
            <person name="Arakawa T."/>
            <person name="Banh J."/>
            <person name="Banno F."/>
            <person name="Bowser L."/>
            <person name="Brooks S.Y."/>
            <person name="Carninci P."/>
            <person name="Chao Q."/>
            <person name="Choy N."/>
            <person name="Enju A."/>
            <person name="Goldsmith A.D."/>
            <person name="Gurjal M."/>
            <person name="Hansen N.F."/>
            <person name="Hayashizaki Y."/>
            <person name="Johnson-Hopson C."/>
            <person name="Hsuan V.W."/>
            <person name="Iida K."/>
            <person name="Karnes M."/>
            <person name="Khan S."/>
            <person name="Koesema E."/>
            <person name="Ishida J."/>
            <person name="Jiang P.X."/>
            <person name="Jones T."/>
            <person name="Kawai J."/>
            <person name="Kamiya A."/>
            <person name="Meyers C."/>
            <person name="Nakajima M."/>
            <person name="Narusaka M."/>
            <person name="Seki M."/>
            <person name="Sakurai T."/>
            <person name="Satou M."/>
            <person name="Tamse R."/>
            <person name="Vaysberg M."/>
            <person name="Wallender E.K."/>
            <person name="Wong C."/>
            <person name="Yamamura Y."/>
            <person name="Yuan S."/>
            <person name="Shinozaki K."/>
            <person name="Davis R.W."/>
            <person name="Theologis A."/>
            <person name="Ecker J.R."/>
        </authorList>
    </citation>
    <scope>NUCLEOTIDE SEQUENCE [LARGE SCALE MRNA]</scope>
    <source>
        <strain>cv. Columbia</strain>
    </source>
</reference>
<reference key="4">
    <citation type="journal article" date="2002" name="Nucleic Acids Res.">
        <title>Genome analysis: RNA recognition motif (RRM) and K homology (KH) domain RNA-binding proteins from the flowering plant Arabidopsis thaliana.</title>
        <authorList>
            <person name="Lorkovic Z.J."/>
            <person name="Barta A."/>
        </authorList>
    </citation>
    <scope>GENE FAMILY</scope>
</reference>
<dbReference type="EMBL" id="AB011476">
    <property type="protein sequence ID" value="BAB09296.1"/>
    <property type="molecule type" value="Genomic_DNA"/>
</dbReference>
<dbReference type="EMBL" id="CP002688">
    <property type="protein sequence ID" value="AED96725.1"/>
    <property type="molecule type" value="Genomic_DNA"/>
</dbReference>
<dbReference type="EMBL" id="AY080852">
    <property type="protein sequence ID" value="AAL87326.1"/>
    <property type="molecule type" value="mRNA"/>
</dbReference>
<dbReference type="EMBL" id="BT000873">
    <property type="protein sequence ID" value="AAN41273.1"/>
    <property type="molecule type" value="mRNA"/>
</dbReference>
<dbReference type="RefSeq" id="NP_200425.1">
    <property type="nucleotide sequence ID" value="NM_124996.4"/>
</dbReference>
<dbReference type="SMR" id="Q9FKT4"/>
<dbReference type="FunCoup" id="Q9FKT4">
    <property type="interactions" value="2008"/>
</dbReference>
<dbReference type="STRING" id="3702.Q9FKT4"/>
<dbReference type="GlyGen" id="Q9FKT4">
    <property type="glycosylation" value="1 site, 1 O-linked glycan (1 site)"/>
</dbReference>
<dbReference type="iPTMnet" id="Q9FKT4"/>
<dbReference type="PaxDb" id="3702-AT5G56140.1"/>
<dbReference type="ProteomicsDB" id="236476"/>
<dbReference type="EnsemblPlants" id="AT5G56140.1">
    <property type="protein sequence ID" value="AT5G56140.1"/>
    <property type="gene ID" value="AT5G56140"/>
</dbReference>
<dbReference type="GeneID" id="835713"/>
<dbReference type="Gramene" id="AT5G56140.1">
    <property type="protein sequence ID" value="AT5G56140.1"/>
    <property type="gene ID" value="AT5G56140"/>
</dbReference>
<dbReference type="KEGG" id="ath:AT5G56140"/>
<dbReference type="Araport" id="AT5G56140"/>
<dbReference type="TAIR" id="AT5G56140"/>
<dbReference type="eggNOG" id="KOG1588">
    <property type="taxonomic scope" value="Eukaryota"/>
</dbReference>
<dbReference type="HOGENOM" id="CLU_065679_0_1_1"/>
<dbReference type="InParanoid" id="Q9FKT4"/>
<dbReference type="OMA" id="RADLNGW"/>
<dbReference type="OrthoDB" id="6777263at2759"/>
<dbReference type="PhylomeDB" id="Q9FKT4"/>
<dbReference type="PRO" id="PR:Q9FKT4"/>
<dbReference type="Proteomes" id="UP000006548">
    <property type="component" value="Chromosome 5"/>
</dbReference>
<dbReference type="ExpressionAtlas" id="Q9FKT4">
    <property type="expression patterns" value="baseline and differential"/>
</dbReference>
<dbReference type="GO" id="GO:0005634">
    <property type="term" value="C:nucleus"/>
    <property type="evidence" value="ECO:0007669"/>
    <property type="project" value="UniProtKB-SubCell"/>
</dbReference>
<dbReference type="GO" id="GO:0003723">
    <property type="term" value="F:RNA binding"/>
    <property type="evidence" value="ECO:0007669"/>
    <property type="project" value="UniProtKB-KW"/>
</dbReference>
<dbReference type="Gene3D" id="3.30.1370.10">
    <property type="entry name" value="K Homology domain, type 1"/>
    <property type="match status" value="1"/>
</dbReference>
<dbReference type="InterPro" id="IPR045071">
    <property type="entry name" value="BBP-like"/>
</dbReference>
<dbReference type="InterPro" id="IPR055256">
    <property type="entry name" value="KH_1_KHDC4/BBP-like"/>
</dbReference>
<dbReference type="InterPro" id="IPR004087">
    <property type="entry name" value="KH_dom"/>
</dbReference>
<dbReference type="InterPro" id="IPR036612">
    <property type="entry name" value="KH_dom_type_1_sf"/>
</dbReference>
<dbReference type="InterPro" id="IPR032377">
    <property type="entry name" value="STAR_dimer"/>
</dbReference>
<dbReference type="PANTHER" id="PTHR11208:SF137">
    <property type="entry name" value="K HOMOLOGY DOMAIN-CONTAINING PROTEIN"/>
    <property type="match status" value="1"/>
</dbReference>
<dbReference type="PANTHER" id="PTHR11208">
    <property type="entry name" value="RNA-BINDING PROTEIN RELATED"/>
    <property type="match status" value="1"/>
</dbReference>
<dbReference type="Pfam" id="PF22675">
    <property type="entry name" value="KH-I_KHDC4-BBP"/>
    <property type="match status" value="1"/>
</dbReference>
<dbReference type="Pfam" id="PF16544">
    <property type="entry name" value="STAR_dimer"/>
    <property type="match status" value="1"/>
</dbReference>
<dbReference type="SMART" id="SM00322">
    <property type="entry name" value="KH"/>
    <property type="match status" value="1"/>
</dbReference>
<dbReference type="SUPFAM" id="SSF54791">
    <property type="entry name" value="Eukaryotic type KH-domain (KH-domain type I)"/>
    <property type="match status" value="1"/>
</dbReference>
<organism>
    <name type="scientific">Arabidopsis thaliana</name>
    <name type="common">Mouse-ear cress</name>
    <dbReference type="NCBI Taxonomy" id="3702"/>
    <lineage>
        <taxon>Eukaryota</taxon>
        <taxon>Viridiplantae</taxon>
        <taxon>Streptophyta</taxon>
        <taxon>Embryophyta</taxon>
        <taxon>Tracheophyta</taxon>
        <taxon>Spermatophyta</taxon>
        <taxon>Magnoliopsida</taxon>
        <taxon>eudicotyledons</taxon>
        <taxon>Gunneridae</taxon>
        <taxon>Pentapetalae</taxon>
        <taxon>rosids</taxon>
        <taxon>malvids</taxon>
        <taxon>Brassicales</taxon>
        <taxon>Brassicaceae</taxon>
        <taxon>Camelineae</taxon>
        <taxon>Arabidopsis</taxon>
    </lineage>
</organism>
<comment type="subcellular location">
    <subcellularLocation>
        <location evidence="3">Nucleus</location>
    </subcellularLocation>
</comment>
<gene>
    <name type="ordered locus">At5g56140</name>
    <name type="ORF">MDA7.20</name>
</gene>
<sequence>MMMMSSLGGGGGGGGGSGGGIGGGGGGRFMTYSSSLSVPPSAPQSPNYSGGLRSQSSVFVEQEKYLSELLAERHKLTPFLPVLPHAFRLLNQEILRVTTLLENATVLSQSGLDHPSPLASGGIFQNARADMNGWASQFPSERSVPSSPGPNWLNSPGSSSGLIAKRTIRVDIPVDNYPNFNFVGRLLGPRGNSLKRVEASTDCRVLIRGRGSIKDPIKEEMMRGKPGYEHLNEPLHILVEAELPIEIVDARLMQAREILDDLLTPMEETHDMYKKQQLRELALLNGTLREEGSPMSGSVSPYNSLGMKRAKTREG</sequence>